<reference key="1">
    <citation type="journal article" date="2009" name="J. Bacteriol.">
        <title>Genome sequences of three Agrobacterium biovars help elucidate the evolution of multichromosome genomes in bacteria.</title>
        <authorList>
            <person name="Slater S.C."/>
            <person name="Goldman B.S."/>
            <person name="Goodner B."/>
            <person name="Setubal J.C."/>
            <person name="Farrand S.K."/>
            <person name="Nester E.W."/>
            <person name="Burr T.J."/>
            <person name="Banta L."/>
            <person name="Dickerman A.W."/>
            <person name="Paulsen I."/>
            <person name="Otten L."/>
            <person name="Suen G."/>
            <person name="Welch R."/>
            <person name="Almeida N.F."/>
            <person name="Arnold F."/>
            <person name="Burton O.T."/>
            <person name="Du Z."/>
            <person name="Ewing A."/>
            <person name="Godsy E."/>
            <person name="Heisel S."/>
            <person name="Houmiel K.L."/>
            <person name="Jhaveri J."/>
            <person name="Lu J."/>
            <person name="Miller N.M."/>
            <person name="Norton S."/>
            <person name="Chen Q."/>
            <person name="Phoolcharoen W."/>
            <person name="Ohlin V."/>
            <person name="Ondrusek D."/>
            <person name="Pride N."/>
            <person name="Stricklin S.L."/>
            <person name="Sun J."/>
            <person name="Wheeler C."/>
            <person name="Wilson L."/>
            <person name="Zhu H."/>
            <person name="Wood D.W."/>
        </authorList>
    </citation>
    <scope>NUCLEOTIDE SEQUENCE [LARGE SCALE GENOMIC DNA]</scope>
    <source>
        <strain>ATCC BAA-846 / DSM 112012 / S4</strain>
    </source>
</reference>
<dbReference type="EMBL" id="CP000633">
    <property type="protein sequence ID" value="ACM36808.1"/>
    <property type="molecule type" value="Genomic_DNA"/>
</dbReference>
<dbReference type="RefSeq" id="WP_015916229.1">
    <property type="nucleotide sequence ID" value="NC_011989.1"/>
</dbReference>
<dbReference type="SMR" id="B9JX30"/>
<dbReference type="STRING" id="311402.Avi_2521"/>
<dbReference type="GeneID" id="60682830"/>
<dbReference type="KEGG" id="avi:Avi_2521"/>
<dbReference type="eggNOG" id="COG0233">
    <property type="taxonomic scope" value="Bacteria"/>
</dbReference>
<dbReference type="HOGENOM" id="CLU_073981_2_0_5"/>
<dbReference type="Proteomes" id="UP000001596">
    <property type="component" value="Chromosome 1"/>
</dbReference>
<dbReference type="GO" id="GO:0005829">
    <property type="term" value="C:cytosol"/>
    <property type="evidence" value="ECO:0007669"/>
    <property type="project" value="GOC"/>
</dbReference>
<dbReference type="GO" id="GO:0043023">
    <property type="term" value="F:ribosomal large subunit binding"/>
    <property type="evidence" value="ECO:0007669"/>
    <property type="project" value="TreeGrafter"/>
</dbReference>
<dbReference type="GO" id="GO:0002184">
    <property type="term" value="P:cytoplasmic translational termination"/>
    <property type="evidence" value="ECO:0007669"/>
    <property type="project" value="TreeGrafter"/>
</dbReference>
<dbReference type="CDD" id="cd00520">
    <property type="entry name" value="RRF"/>
    <property type="match status" value="1"/>
</dbReference>
<dbReference type="FunFam" id="1.10.132.20:FF:000001">
    <property type="entry name" value="Ribosome-recycling factor"/>
    <property type="match status" value="1"/>
</dbReference>
<dbReference type="FunFam" id="3.30.1360.40:FF:000001">
    <property type="entry name" value="Ribosome-recycling factor"/>
    <property type="match status" value="1"/>
</dbReference>
<dbReference type="Gene3D" id="3.30.1360.40">
    <property type="match status" value="1"/>
</dbReference>
<dbReference type="Gene3D" id="1.10.132.20">
    <property type="entry name" value="Ribosome-recycling factor"/>
    <property type="match status" value="1"/>
</dbReference>
<dbReference type="HAMAP" id="MF_00040">
    <property type="entry name" value="RRF"/>
    <property type="match status" value="1"/>
</dbReference>
<dbReference type="InterPro" id="IPR002661">
    <property type="entry name" value="Ribosome_recyc_fac"/>
</dbReference>
<dbReference type="InterPro" id="IPR023584">
    <property type="entry name" value="Ribosome_recyc_fac_dom"/>
</dbReference>
<dbReference type="InterPro" id="IPR036191">
    <property type="entry name" value="RRF_sf"/>
</dbReference>
<dbReference type="NCBIfam" id="TIGR00496">
    <property type="entry name" value="frr"/>
    <property type="match status" value="1"/>
</dbReference>
<dbReference type="PANTHER" id="PTHR20982:SF3">
    <property type="entry name" value="MITOCHONDRIAL RIBOSOME RECYCLING FACTOR PSEUDO 1"/>
    <property type="match status" value="1"/>
</dbReference>
<dbReference type="PANTHER" id="PTHR20982">
    <property type="entry name" value="RIBOSOME RECYCLING FACTOR"/>
    <property type="match status" value="1"/>
</dbReference>
<dbReference type="Pfam" id="PF01765">
    <property type="entry name" value="RRF"/>
    <property type="match status" value="1"/>
</dbReference>
<dbReference type="SUPFAM" id="SSF55194">
    <property type="entry name" value="Ribosome recycling factor, RRF"/>
    <property type="match status" value="1"/>
</dbReference>
<organism>
    <name type="scientific">Allorhizobium ampelinum (strain ATCC BAA-846 / DSM 112012 / S4)</name>
    <name type="common">Agrobacterium vitis (strain S4)</name>
    <dbReference type="NCBI Taxonomy" id="311402"/>
    <lineage>
        <taxon>Bacteria</taxon>
        <taxon>Pseudomonadati</taxon>
        <taxon>Pseudomonadota</taxon>
        <taxon>Alphaproteobacteria</taxon>
        <taxon>Hyphomicrobiales</taxon>
        <taxon>Rhizobiaceae</taxon>
        <taxon>Rhizobium/Agrobacterium group</taxon>
        <taxon>Allorhizobium</taxon>
        <taxon>Allorhizobium ampelinum</taxon>
    </lineage>
</organism>
<accession>B9JX30</accession>
<proteinExistence type="inferred from homology"/>
<sequence length="186" mass="20566">MTAGIDLNDIKRRMDGAINAFKSDLASLRTGRASANILDPVMVEAYGSRVALNTVANITVPEPRMLGVSIWDKSMVGAVDRAIRESNLGLNPIVDGQNLRIPLPELNEERRKSLVKVAHGYAENSKVAIRHVRRDGMDSLKKAEKDGEIGKDDARSLSEKLQKMTDDTISDIDRLLAEKEKEIMQV</sequence>
<gene>
    <name evidence="1" type="primary">frr</name>
    <name type="ordered locus">Avi_2521</name>
</gene>
<feature type="chain" id="PRO_1000194888" description="Ribosome-recycling factor">
    <location>
        <begin position="1"/>
        <end position="186"/>
    </location>
</feature>
<keyword id="KW-0963">Cytoplasm</keyword>
<keyword id="KW-0648">Protein biosynthesis</keyword>
<keyword id="KW-1185">Reference proteome</keyword>
<comment type="function">
    <text evidence="1">Responsible for the release of ribosomes from messenger RNA at the termination of protein biosynthesis. May increase the efficiency of translation by recycling ribosomes from one round of translation to another.</text>
</comment>
<comment type="subcellular location">
    <subcellularLocation>
        <location evidence="1">Cytoplasm</location>
    </subcellularLocation>
</comment>
<comment type="similarity">
    <text evidence="1">Belongs to the RRF family.</text>
</comment>
<evidence type="ECO:0000255" key="1">
    <source>
        <dbReference type="HAMAP-Rule" id="MF_00040"/>
    </source>
</evidence>
<protein>
    <recommendedName>
        <fullName evidence="1">Ribosome-recycling factor</fullName>
        <shortName evidence="1">RRF</shortName>
    </recommendedName>
    <alternativeName>
        <fullName evidence="1">Ribosome-releasing factor</fullName>
    </alternativeName>
</protein>
<name>RRF_ALLAM</name>